<feature type="signal peptide" evidence="2">
    <location>
        <begin position="1"/>
        <end position="22"/>
    </location>
</feature>
<feature type="chain" id="PRO_0000423038" description="Cystatin-1">
    <location>
        <begin position="23"/>
        <end position="139"/>
    </location>
</feature>
<feature type="domain" description="Cystatin">
    <location>
        <begin position="27"/>
        <end position="127"/>
    </location>
</feature>
<feature type="short sequence motif" description="Secondary area of contact" evidence="1">
    <location>
        <begin position="71"/>
        <end position="75"/>
    </location>
</feature>
<feature type="site" description="Reactive site" evidence="1">
    <location>
        <position position="27"/>
    </location>
</feature>
<feature type="disulfide bond" evidence="1">
    <location>
        <begin position="89"/>
        <end position="105"/>
    </location>
</feature>
<feature type="disulfide bond" evidence="1">
    <location>
        <begin position="118"/>
        <end position="138"/>
    </location>
</feature>
<proteinExistence type="evidence at transcript level"/>
<sequence length="139" mass="15623">MHSRLPVPASLCLLLLLPSVLPASMPGGLSPRDVTDPEVQEAAVFAVEEYNARSTNSNYFKALRLVQAESQVVSGAKYYLTMELVKTSCRKTNGNPKGYQEIQNCRLPPRNQQEKLTCHFEVWSRPWLNKTLLTKVTCN</sequence>
<reference key="1">
    <citation type="journal article" date="2012" name="BMC Genomics">
        <title>The venom-gland transcriptome of the eastern diamondback rattlesnake (Crotalus adamanteus).</title>
        <authorList>
            <person name="Rokyta D.R."/>
            <person name="Lemmon A.R."/>
            <person name="Margres M.J."/>
            <person name="Aronow K."/>
        </authorList>
    </citation>
    <scope>NUCLEOTIDE SEQUENCE [MRNA]</scope>
    <source>
        <tissue>Venom gland</tissue>
    </source>
</reference>
<name>CYT1_CROAD</name>
<organism>
    <name type="scientific">Crotalus adamanteus</name>
    <name type="common">Eastern diamondback rattlesnake</name>
    <dbReference type="NCBI Taxonomy" id="8729"/>
    <lineage>
        <taxon>Eukaryota</taxon>
        <taxon>Metazoa</taxon>
        <taxon>Chordata</taxon>
        <taxon>Craniata</taxon>
        <taxon>Vertebrata</taxon>
        <taxon>Euteleostomi</taxon>
        <taxon>Lepidosauria</taxon>
        <taxon>Squamata</taxon>
        <taxon>Bifurcata</taxon>
        <taxon>Unidentata</taxon>
        <taxon>Episquamata</taxon>
        <taxon>Toxicofera</taxon>
        <taxon>Serpentes</taxon>
        <taxon>Colubroidea</taxon>
        <taxon>Viperidae</taxon>
        <taxon>Crotalinae</taxon>
        <taxon>Crotalus</taxon>
    </lineage>
</organism>
<protein>
    <recommendedName>
        <fullName>Cystatin-1</fullName>
    </recommendedName>
</protein>
<comment type="function">
    <text evidence="1">Inhibits various C1 cysteine proteases including cathepsin L, papain and cathepsin B. This protein has no toxic activity and its function in the venom is unknown. It may play a role as housekeeping or regulatory protein (By similarity).</text>
</comment>
<comment type="subcellular location">
    <subcellularLocation>
        <location evidence="1">Secreted</location>
    </subcellularLocation>
</comment>
<comment type="tissue specificity">
    <text>Expressed by the venom gland.</text>
</comment>
<comment type="similarity">
    <text evidence="3">Belongs to the cystatin family.</text>
</comment>
<evidence type="ECO:0000250" key="1"/>
<evidence type="ECO:0000255" key="2"/>
<evidence type="ECO:0000305" key="3"/>
<dbReference type="EMBL" id="JU174278">
    <property type="protein sequence ID" value="AFJ49804.1"/>
    <property type="molecule type" value="mRNA"/>
</dbReference>
<dbReference type="SMR" id="J3RYX9"/>
<dbReference type="MEROPS" id="I25.012"/>
<dbReference type="GO" id="GO:0070062">
    <property type="term" value="C:extracellular exosome"/>
    <property type="evidence" value="ECO:0007669"/>
    <property type="project" value="TreeGrafter"/>
</dbReference>
<dbReference type="GO" id="GO:0004869">
    <property type="term" value="F:cysteine-type endopeptidase inhibitor activity"/>
    <property type="evidence" value="ECO:0007669"/>
    <property type="project" value="UniProtKB-KW"/>
</dbReference>
<dbReference type="CDD" id="cd00042">
    <property type="entry name" value="CY"/>
    <property type="match status" value="1"/>
</dbReference>
<dbReference type="FunFam" id="3.10.450.10:FF:000004">
    <property type="entry name" value="Cystatin C"/>
    <property type="match status" value="1"/>
</dbReference>
<dbReference type="Gene3D" id="3.10.450.10">
    <property type="match status" value="1"/>
</dbReference>
<dbReference type="InterPro" id="IPR000010">
    <property type="entry name" value="Cystatin_dom"/>
</dbReference>
<dbReference type="InterPro" id="IPR046350">
    <property type="entry name" value="Cystatin_sf"/>
</dbReference>
<dbReference type="InterPro" id="IPR018073">
    <property type="entry name" value="Prot_inh_cystat_CS"/>
</dbReference>
<dbReference type="PANTHER" id="PTHR47033">
    <property type="entry name" value="CYSTATIN-M"/>
    <property type="match status" value="1"/>
</dbReference>
<dbReference type="PANTHER" id="PTHR47033:SF1">
    <property type="entry name" value="CYSTATIN-M"/>
    <property type="match status" value="1"/>
</dbReference>
<dbReference type="Pfam" id="PF00031">
    <property type="entry name" value="Cystatin"/>
    <property type="match status" value="1"/>
</dbReference>
<dbReference type="SMART" id="SM00043">
    <property type="entry name" value="CY"/>
    <property type="match status" value="1"/>
</dbReference>
<dbReference type="SUPFAM" id="SSF54403">
    <property type="entry name" value="Cystatin/monellin"/>
    <property type="match status" value="1"/>
</dbReference>
<dbReference type="PROSITE" id="PS00287">
    <property type="entry name" value="CYSTATIN"/>
    <property type="match status" value="1"/>
</dbReference>
<keyword id="KW-1015">Disulfide bond</keyword>
<keyword id="KW-0646">Protease inhibitor</keyword>
<keyword id="KW-0964">Secreted</keyword>
<keyword id="KW-0732">Signal</keyword>
<keyword id="KW-0789">Thiol protease inhibitor</keyword>
<accession>J3RYX9</accession>